<sequence>MSKPFKLNSAFKPSGDQPEAIRRLEEGLEDGLAHQTLLGVTGSGKTFTIANVIADLQRPTMVLAPNKTLAAQLYGEMKEFFPENAVEYFVSYYDYYQPEAYVPSSDTFIEKDASVNEHIEQMRLSATKAMLERRDVVVVASVSAIYGLGDPDLYLKMMLHLTVGMIIDQRAILRRLAELQYARNDQAFQRGTFRVRGEVIDIFPAESDDIALRVELFDEEVERLSLFDPLTGQIVSTIPRFTIYPKTHYVTPRERIVQAMEEIKEELAARRKVLLENNKLLEEQRLTQRTQFDLEMMNELGYCSGIENYSRFLSGRGPGEPPPTLFDYLPADGLLVVDESHVTIPQIGGMYRGDRARKETLVEYGFRLPSALDNRPLKFEEFEALAPQTIYVSATPGNYELEKSGGDVVDQVVRPTGLLDPIIEVRPVATQVDDLLSEIRQRAAINERVLVTTLTKRMAEDLTEYLEEHGERVRYLHSDIDTVERMEIIRDLRLGEFDVLVGINLLREGLDMPEVSLVAILDADKEGFLRSERSLIQTIGRAARNVNGKAILYGDKITPSMAKAIGETERRREKQQKYNEEHGITPQGLNKKVVDILALGQNIAKTKAKGRGKSRPIVEPDNVPMDMSPKALQQKIHELEGLMMQHAQNLEFEEAAQIRDQLHQLRDLFIAAS</sequence>
<evidence type="ECO:0000255" key="1">
    <source>
        <dbReference type="HAMAP-Rule" id="MF_00204"/>
    </source>
</evidence>
<evidence type="ECO:0000256" key="2">
    <source>
        <dbReference type="SAM" id="MobiDB-lite"/>
    </source>
</evidence>
<gene>
    <name evidence="1" type="primary">uvrB</name>
    <name type="ordered locus">ECIAI39_0755</name>
</gene>
<reference key="1">
    <citation type="journal article" date="2009" name="PLoS Genet.">
        <title>Organised genome dynamics in the Escherichia coli species results in highly diverse adaptive paths.</title>
        <authorList>
            <person name="Touchon M."/>
            <person name="Hoede C."/>
            <person name="Tenaillon O."/>
            <person name="Barbe V."/>
            <person name="Baeriswyl S."/>
            <person name="Bidet P."/>
            <person name="Bingen E."/>
            <person name="Bonacorsi S."/>
            <person name="Bouchier C."/>
            <person name="Bouvet O."/>
            <person name="Calteau A."/>
            <person name="Chiapello H."/>
            <person name="Clermont O."/>
            <person name="Cruveiller S."/>
            <person name="Danchin A."/>
            <person name="Diard M."/>
            <person name="Dossat C."/>
            <person name="Karoui M.E."/>
            <person name="Frapy E."/>
            <person name="Garry L."/>
            <person name="Ghigo J.M."/>
            <person name="Gilles A.M."/>
            <person name="Johnson J."/>
            <person name="Le Bouguenec C."/>
            <person name="Lescat M."/>
            <person name="Mangenot S."/>
            <person name="Martinez-Jehanne V."/>
            <person name="Matic I."/>
            <person name="Nassif X."/>
            <person name="Oztas S."/>
            <person name="Petit M.A."/>
            <person name="Pichon C."/>
            <person name="Rouy Z."/>
            <person name="Ruf C.S."/>
            <person name="Schneider D."/>
            <person name="Tourret J."/>
            <person name="Vacherie B."/>
            <person name="Vallenet D."/>
            <person name="Medigue C."/>
            <person name="Rocha E.P.C."/>
            <person name="Denamur E."/>
        </authorList>
    </citation>
    <scope>NUCLEOTIDE SEQUENCE [LARGE SCALE GENOMIC DNA]</scope>
    <source>
        <strain>IAI39 / ExPEC</strain>
    </source>
</reference>
<comment type="function">
    <text evidence="1">The UvrABC repair system catalyzes the recognition and processing of DNA lesions. A damage recognition complex composed of 2 UvrA and 2 UvrB subunits scans DNA for abnormalities. Upon binding of the UvrA(2)B(2) complex to a putative damaged site, the DNA wraps around one UvrB monomer. DNA wrap is dependent on ATP binding by UvrB and probably causes local melting of the DNA helix, facilitating insertion of UvrB beta-hairpin between the DNA strands. Then UvrB probes one DNA strand for the presence of a lesion. If a lesion is found the UvrA subunits dissociate and the UvrB-DNA preincision complex is formed. This complex is subsequently bound by UvrC and the second UvrB is released. If no lesion is found, the DNA wraps around the other UvrB subunit that will check the other stand for damage.</text>
</comment>
<comment type="subunit">
    <text evidence="1">Forms a heterotetramer with UvrA during the search for lesions. Interacts with UvrC in an incision complex.</text>
</comment>
<comment type="subcellular location">
    <subcellularLocation>
        <location evidence="1">Cytoplasm</location>
    </subcellularLocation>
</comment>
<comment type="domain">
    <text evidence="1">The beta-hairpin motif is involved in DNA binding.</text>
</comment>
<comment type="similarity">
    <text evidence="1">Belongs to the UvrB family.</text>
</comment>
<accession>B7NNK9</accession>
<name>UVRB_ECO7I</name>
<organism>
    <name type="scientific">Escherichia coli O7:K1 (strain IAI39 / ExPEC)</name>
    <dbReference type="NCBI Taxonomy" id="585057"/>
    <lineage>
        <taxon>Bacteria</taxon>
        <taxon>Pseudomonadati</taxon>
        <taxon>Pseudomonadota</taxon>
        <taxon>Gammaproteobacteria</taxon>
        <taxon>Enterobacterales</taxon>
        <taxon>Enterobacteriaceae</taxon>
        <taxon>Escherichia</taxon>
    </lineage>
</organism>
<protein>
    <recommendedName>
        <fullName evidence="1">UvrABC system protein B</fullName>
        <shortName evidence="1">Protein UvrB</shortName>
    </recommendedName>
    <alternativeName>
        <fullName evidence="1">Excinuclease ABC subunit B</fullName>
    </alternativeName>
</protein>
<feature type="chain" id="PRO_1000200545" description="UvrABC system protein B">
    <location>
        <begin position="1"/>
        <end position="673"/>
    </location>
</feature>
<feature type="domain" description="Helicase ATP-binding" evidence="1">
    <location>
        <begin position="26"/>
        <end position="183"/>
    </location>
</feature>
<feature type="domain" description="Helicase C-terminal" evidence="1">
    <location>
        <begin position="431"/>
        <end position="597"/>
    </location>
</feature>
<feature type="domain" description="UVR" evidence="1">
    <location>
        <begin position="633"/>
        <end position="668"/>
    </location>
</feature>
<feature type="region of interest" description="Disordered" evidence="2">
    <location>
        <begin position="608"/>
        <end position="627"/>
    </location>
</feature>
<feature type="short sequence motif" description="Beta-hairpin">
    <location>
        <begin position="92"/>
        <end position="115"/>
    </location>
</feature>
<feature type="binding site" evidence="1">
    <location>
        <begin position="39"/>
        <end position="46"/>
    </location>
    <ligand>
        <name>ATP</name>
        <dbReference type="ChEBI" id="CHEBI:30616"/>
    </ligand>
</feature>
<proteinExistence type="inferred from homology"/>
<keyword id="KW-0067">ATP-binding</keyword>
<keyword id="KW-0963">Cytoplasm</keyword>
<keyword id="KW-0227">DNA damage</keyword>
<keyword id="KW-0228">DNA excision</keyword>
<keyword id="KW-0234">DNA repair</keyword>
<keyword id="KW-0267">Excision nuclease</keyword>
<keyword id="KW-0347">Helicase</keyword>
<keyword id="KW-0378">Hydrolase</keyword>
<keyword id="KW-0547">Nucleotide-binding</keyword>
<keyword id="KW-0742">SOS response</keyword>
<dbReference type="EMBL" id="CU928164">
    <property type="protein sequence ID" value="CAR16892.1"/>
    <property type="molecule type" value="Genomic_DNA"/>
</dbReference>
<dbReference type="RefSeq" id="WP_000042532.1">
    <property type="nucleotide sequence ID" value="NC_011750.1"/>
</dbReference>
<dbReference type="RefSeq" id="YP_002406780.1">
    <property type="nucleotide sequence ID" value="NC_011750.1"/>
</dbReference>
<dbReference type="SMR" id="B7NNK9"/>
<dbReference type="STRING" id="585057.ECIAI39_0755"/>
<dbReference type="KEGG" id="ect:ECIAI39_0755"/>
<dbReference type="PATRIC" id="fig|585057.6.peg.798"/>
<dbReference type="HOGENOM" id="CLU_009621_2_1_6"/>
<dbReference type="Proteomes" id="UP000000749">
    <property type="component" value="Chromosome"/>
</dbReference>
<dbReference type="GO" id="GO:0005737">
    <property type="term" value="C:cytoplasm"/>
    <property type="evidence" value="ECO:0007669"/>
    <property type="project" value="UniProtKB-SubCell"/>
</dbReference>
<dbReference type="GO" id="GO:0009380">
    <property type="term" value="C:excinuclease repair complex"/>
    <property type="evidence" value="ECO:0007669"/>
    <property type="project" value="InterPro"/>
</dbReference>
<dbReference type="GO" id="GO:0005524">
    <property type="term" value="F:ATP binding"/>
    <property type="evidence" value="ECO:0007669"/>
    <property type="project" value="UniProtKB-UniRule"/>
</dbReference>
<dbReference type="GO" id="GO:0016887">
    <property type="term" value="F:ATP hydrolysis activity"/>
    <property type="evidence" value="ECO:0007669"/>
    <property type="project" value="InterPro"/>
</dbReference>
<dbReference type="GO" id="GO:0003677">
    <property type="term" value="F:DNA binding"/>
    <property type="evidence" value="ECO:0007669"/>
    <property type="project" value="UniProtKB-UniRule"/>
</dbReference>
<dbReference type="GO" id="GO:0009381">
    <property type="term" value="F:excinuclease ABC activity"/>
    <property type="evidence" value="ECO:0007669"/>
    <property type="project" value="UniProtKB-UniRule"/>
</dbReference>
<dbReference type="GO" id="GO:0004386">
    <property type="term" value="F:helicase activity"/>
    <property type="evidence" value="ECO:0007669"/>
    <property type="project" value="UniProtKB-KW"/>
</dbReference>
<dbReference type="GO" id="GO:0006289">
    <property type="term" value="P:nucleotide-excision repair"/>
    <property type="evidence" value="ECO:0007669"/>
    <property type="project" value="UniProtKB-UniRule"/>
</dbReference>
<dbReference type="GO" id="GO:0009432">
    <property type="term" value="P:SOS response"/>
    <property type="evidence" value="ECO:0007669"/>
    <property type="project" value="UniProtKB-UniRule"/>
</dbReference>
<dbReference type="CDD" id="cd17916">
    <property type="entry name" value="DEXHc_UvrB"/>
    <property type="match status" value="1"/>
</dbReference>
<dbReference type="CDD" id="cd18790">
    <property type="entry name" value="SF2_C_UvrB"/>
    <property type="match status" value="1"/>
</dbReference>
<dbReference type="FunFam" id="3.40.50.300:FF:000257">
    <property type="entry name" value="UvrABC system protein B"/>
    <property type="match status" value="1"/>
</dbReference>
<dbReference type="FunFam" id="3.40.50.300:FF:000401">
    <property type="entry name" value="UvrABC system protein B"/>
    <property type="match status" value="1"/>
</dbReference>
<dbReference type="FunFam" id="3.40.50.300:FF:000477">
    <property type="entry name" value="UvrABC system protein B"/>
    <property type="match status" value="1"/>
</dbReference>
<dbReference type="Gene3D" id="3.40.50.300">
    <property type="entry name" value="P-loop containing nucleotide triphosphate hydrolases"/>
    <property type="match status" value="3"/>
</dbReference>
<dbReference type="Gene3D" id="4.10.860.10">
    <property type="entry name" value="UVR domain"/>
    <property type="match status" value="1"/>
</dbReference>
<dbReference type="HAMAP" id="MF_00204">
    <property type="entry name" value="UvrB"/>
    <property type="match status" value="1"/>
</dbReference>
<dbReference type="InterPro" id="IPR006935">
    <property type="entry name" value="Helicase/UvrB_N"/>
</dbReference>
<dbReference type="InterPro" id="IPR014001">
    <property type="entry name" value="Helicase_ATP-bd"/>
</dbReference>
<dbReference type="InterPro" id="IPR001650">
    <property type="entry name" value="Helicase_C-like"/>
</dbReference>
<dbReference type="InterPro" id="IPR027417">
    <property type="entry name" value="P-loop_NTPase"/>
</dbReference>
<dbReference type="InterPro" id="IPR001943">
    <property type="entry name" value="UVR_dom"/>
</dbReference>
<dbReference type="InterPro" id="IPR036876">
    <property type="entry name" value="UVR_dom_sf"/>
</dbReference>
<dbReference type="InterPro" id="IPR004807">
    <property type="entry name" value="UvrB"/>
</dbReference>
<dbReference type="InterPro" id="IPR041471">
    <property type="entry name" value="UvrB_inter"/>
</dbReference>
<dbReference type="InterPro" id="IPR024759">
    <property type="entry name" value="UvrB_YAD/RRR_dom"/>
</dbReference>
<dbReference type="NCBIfam" id="NF003673">
    <property type="entry name" value="PRK05298.1"/>
    <property type="match status" value="1"/>
</dbReference>
<dbReference type="NCBIfam" id="TIGR00631">
    <property type="entry name" value="uvrb"/>
    <property type="match status" value="1"/>
</dbReference>
<dbReference type="PANTHER" id="PTHR24029">
    <property type="entry name" value="UVRABC SYSTEM PROTEIN B"/>
    <property type="match status" value="1"/>
</dbReference>
<dbReference type="PANTHER" id="PTHR24029:SF0">
    <property type="entry name" value="UVRABC SYSTEM PROTEIN B"/>
    <property type="match status" value="1"/>
</dbReference>
<dbReference type="Pfam" id="PF00271">
    <property type="entry name" value="Helicase_C"/>
    <property type="match status" value="1"/>
</dbReference>
<dbReference type="Pfam" id="PF04851">
    <property type="entry name" value="ResIII"/>
    <property type="match status" value="1"/>
</dbReference>
<dbReference type="Pfam" id="PF02151">
    <property type="entry name" value="UVR"/>
    <property type="match status" value="1"/>
</dbReference>
<dbReference type="Pfam" id="PF12344">
    <property type="entry name" value="UvrB"/>
    <property type="match status" value="1"/>
</dbReference>
<dbReference type="Pfam" id="PF17757">
    <property type="entry name" value="UvrB_inter"/>
    <property type="match status" value="1"/>
</dbReference>
<dbReference type="SMART" id="SM00487">
    <property type="entry name" value="DEXDc"/>
    <property type="match status" value="1"/>
</dbReference>
<dbReference type="SMART" id="SM00490">
    <property type="entry name" value="HELICc"/>
    <property type="match status" value="1"/>
</dbReference>
<dbReference type="SUPFAM" id="SSF46600">
    <property type="entry name" value="C-terminal UvrC-binding domain of UvrB"/>
    <property type="match status" value="1"/>
</dbReference>
<dbReference type="SUPFAM" id="SSF52540">
    <property type="entry name" value="P-loop containing nucleoside triphosphate hydrolases"/>
    <property type="match status" value="2"/>
</dbReference>
<dbReference type="PROSITE" id="PS51192">
    <property type="entry name" value="HELICASE_ATP_BIND_1"/>
    <property type="match status" value="1"/>
</dbReference>
<dbReference type="PROSITE" id="PS51194">
    <property type="entry name" value="HELICASE_CTER"/>
    <property type="match status" value="1"/>
</dbReference>
<dbReference type="PROSITE" id="PS50151">
    <property type="entry name" value="UVR"/>
    <property type="match status" value="1"/>
</dbReference>